<sequence length="75" mass="8744">MKQIFIGIIRFYQKFISPMTPPTCRFYPTCSHYGLEAFQTHGALKGFWLTLKRILKCHPFHPGGFDPVPDKKDDK</sequence>
<name>YIDD_BACCN</name>
<evidence type="ECO:0000255" key="1">
    <source>
        <dbReference type="HAMAP-Rule" id="MF_00386"/>
    </source>
</evidence>
<comment type="function">
    <text evidence="1">Could be involved in insertion of integral membrane proteins into the membrane.</text>
</comment>
<comment type="subcellular location">
    <subcellularLocation>
        <location evidence="1">Cell membrane</location>
        <topology evidence="1">Peripheral membrane protein</topology>
        <orientation evidence="1">Cytoplasmic side</orientation>
    </subcellularLocation>
</comment>
<comment type="similarity">
    <text evidence="1">Belongs to the UPF0161 family.</text>
</comment>
<proteinExistence type="inferred from homology"/>
<organism>
    <name type="scientific">Bacillus cytotoxicus (strain DSM 22905 / CIP 110041 / 391-98 / NVH 391-98)</name>
    <dbReference type="NCBI Taxonomy" id="315749"/>
    <lineage>
        <taxon>Bacteria</taxon>
        <taxon>Bacillati</taxon>
        <taxon>Bacillota</taxon>
        <taxon>Bacilli</taxon>
        <taxon>Bacillales</taxon>
        <taxon>Bacillaceae</taxon>
        <taxon>Bacillus</taxon>
        <taxon>Bacillus cereus group</taxon>
    </lineage>
</organism>
<feature type="chain" id="PRO_1000080179" description="Putative membrane protein insertion efficiency factor">
    <location>
        <begin position="1"/>
        <end position="75"/>
    </location>
</feature>
<accession>A7GU64</accession>
<gene>
    <name type="ordered locus">Bcer98_3462</name>
</gene>
<reference key="1">
    <citation type="journal article" date="2008" name="Chem. Biol. Interact.">
        <title>Extending the Bacillus cereus group genomics to putative food-borne pathogens of different toxicity.</title>
        <authorList>
            <person name="Lapidus A."/>
            <person name="Goltsman E."/>
            <person name="Auger S."/>
            <person name="Galleron N."/>
            <person name="Segurens B."/>
            <person name="Dossat C."/>
            <person name="Land M.L."/>
            <person name="Broussolle V."/>
            <person name="Brillard J."/>
            <person name="Guinebretiere M.-H."/>
            <person name="Sanchis V."/>
            <person name="Nguen-the C."/>
            <person name="Lereclus D."/>
            <person name="Richardson P."/>
            <person name="Wincker P."/>
            <person name="Weissenbach J."/>
            <person name="Ehrlich S.D."/>
            <person name="Sorokin A."/>
        </authorList>
    </citation>
    <scope>NUCLEOTIDE SEQUENCE [LARGE SCALE GENOMIC DNA]</scope>
    <source>
        <strain>DSM 22905 / CIP 110041 / 391-98 / NVH 391-98</strain>
    </source>
</reference>
<protein>
    <recommendedName>
        <fullName evidence="1">Putative membrane protein insertion efficiency factor</fullName>
    </recommendedName>
</protein>
<dbReference type="EMBL" id="CP000764">
    <property type="protein sequence ID" value="ABS23672.1"/>
    <property type="molecule type" value="Genomic_DNA"/>
</dbReference>
<dbReference type="STRING" id="315749.Bcer98_3462"/>
<dbReference type="GeneID" id="33898696"/>
<dbReference type="KEGG" id="bcy:Bcer98_3462"/>
<dbReference type="eggNOG" id="COG0759">
    <property type="taxonomic scope" value="Bacteria"/>
</dbReference>
<dbReference type="HOGENOM" id="CLU_144811_6_0_9"/>
<dbReference type="Proteomes" id="UP000002300">
    <property type="component" value="Chromosome"/>
</dbReference>
<dbReference type="GO" id="GO:0005886">
    <property type="term" value="C:plasma membrane"/>
    <property type="evidence" value="ECO:0007669"/>
    <property type="project" value="UniProtKB-SubCell"/>
</dbReference>
<dbReference type="HAMAP" id="MF_00386">
    <property type="entry name" value="UPF0161_YidD"/>
    <property type="match status" value="1"/>
</dbReference>
<dbReference type="InterPro" id="IPR002696">
    <property type="entry name" value="Membr_insert_effic_factor_YidD"/>
</dbReference>
<dbReference type="NCBIfam" id="TIGR00278">
    <property type="entry name" value="membrane protein insertion efficiency factor YidD"/>
    <property type="match status" value="1"/>
</dbReference>
<dbReference type="PANTHER" id="PTHR33383">
    <property type="entry name" value="MEMBRANE PROTEIN INSERTION EFFICIENCY FACTOR-RELATED"/>
    <property type="match status" value="1"/>
</dbReference>
<dbReference type="PANTHER" id="PTHR33383:SF1">
    <property type="entry name" value="MEMBRANE PROTEIN INSERTION EFFICIENCY FACTOR-RELATED"/>
    <property type="match status" value="1"/>
</dbReference>
<dbReference type="Pfam" id="PF01809">
    <property type="entry name" value="YidD"/>
    <property type="match status" value="1"/>
</dbReference>
<dbReference type="SMART" id="SM01234">
    <property type="entry name" value="Haemolytic"/>
    <property type="match status" value="1"/>
</dbReference>
<keyword id="KW-1003">Cell membrane</keyword>
<keyword id="KW-0472">Membrane</keyword>